<feature type="chain" id="PRO_0000278453" description="Homeobox protein HMX1">
    <location>
        <begin position="1"/>
        <end position="348"/>
    </location>
</feature>
<feature type="DNA-binding region" description="Homeobox" evidence="1">
    <location>
        <begin position="203"/>
        <end position="262"/>
    </location>
</feature>
<feature type="region of interest" description="Disordered" evidence="2">
    <location>
        <begin position="29"/>
        <end position="203"/>
    </location>
</feature>
<feature type="short sequence motif" description="HMX family specific domain 1">
    <location>
        <begin position="263"/>
        <end position="273"/>
    </location>
</feature>
<feature type="short sequence motif" description="HMX family specific domain 2">
    <location>
        <begin position="276"/>
        <end position="289"/>
    </location>
</feature>
<feature type="compositionally biased region" description="Acidic residues" evidence="2">
    <location>
        <begin position="42"/>
        <end position="57"/>
    </location>
</feature>
<feature type="compositionally biased region" description="Basic residues" evidence="2">
    <location>
        <begin position="61"/>
        <end position="70"/>
    </location>
</feature>
<feature type="compositionally biased region" description="Pro residues" evidence="2">
    <location>
        <begin position="96"/>
        <end position="105"/>
    </location>
</feature>
<feature type="compositionally biased region" description="Basic and acidic residues" evidence="2">
    <location>
        <begin position="132"/>
        <end position="146"/>
    </location>
</feature>
<feature type="compositionally biased region" description="Low complexity" evidence="2">
    <location>
        <begin position="166"/>
        <end position="175"/>
    </location>
</feature>
<feature type="sequence conflict" description="In Ref. 1; AAF70205." evidence="5" ref="1">
    <original>Q</original>
    <variation>A</variation>
    <location>
        <position position="277"/>
    </location>
</feature>
<feature type="sequence conflict" description="In Ref. 1; AAF70205." evidence="5" ref="1">
    <original>PAA</original>
    <variation>RR</variation>
    <location>
        <begin position="308"/>
        <end position="310"/>
    </location>
</feature>
<accession>Q9NP08</accession>
<evidence type="ECO:0000255" key="1">
    <source>
        <dbReference type="PROSITE-ProRule" id="PRU00108"/>
    </source>
</evidence>
<evidence type="ECO:0000256" key="2">
    <source>
        <dbReference type="SAM" id="MobiDB-lite"/>
    </source>
</evidence>
<evidence type="ECO:0000269" key="3">
    <source>
    </source>
</evidence>
<evidence type="ECO:0000269" key="4">
    <source>
    </source>
</evidence>
<evidence type="ECO:0000305" key="5"/>
<keyword id="KW-0898">Cataract</keyword>
<keyword id="KW-0217">Developmental protein</keyword>
<keyword id="KW-0238">DNA-binding</keyword>
<keyword id="KW-0371">Homeobox</keyword>
<keyword id="KW-1013">Microphthalmia</keyword>
<keyword id="KW-0539">Nucleus</keyword>
<keyword id="KW-1267">Proteomics identification</keyword>
<keyword id="KW-1185">Reference proteome</keyword>
<keyword id="KW-0678">Repressor</keyword>
<keyword id="KW-0804">Transcription</keyword>
<keyword id="KW-0805">Transcription regulation</keyword>
<protein>
    <recommendedName>
        <fullName>Homeobox protein HMX1</fullName>
    </recommendedName>
    <alternativeName>
        <fullName>Homeobox protein H6</fullName>
    </alternativeName>
</protein>
<dbReference type="EMBL" id="M99587">
    <property type="protein sequence ID" value="AAF70205.1"/>
    <property type="status" value="ALT_FRAME"/>
    <property type="molecule type" value="mRNA"/>
</dbReference>
<dbReference type="EMBL" id="AC116612">
    <property type="status" value="NOT_ANNOTATED_CDS"/>
    <property type="molecule type" value="Genomic_DNA"/>
</dbReference>
<dbReference type="CCDS" id="CCDS47018.1"/>
<dbReference type="PIR" id="A47234">
    <property type="entry name" value="A47234"/>
</dbReference>
<dbReference type="RefSeq" id="NP_001293071.1">
    <property type="nucleotide sequence ID" value="NM_001306142.1"/>
</dbReference>
<dbReference type="RefSeq" id="NP_061815.2">
    <property type="nucleotide sequence ID" value="NM_018942.3"/>
</dbReference>
<dbReference type="SMR" id="Q9NP08"/>
<dbReference type="BioGRID" id="109409">
    <property type="interactions" value="1"/>
</dbReference>
<dbReference type="FunCoup" id="Q9NP08">
    <property type="interactions" value="436"/>
</dbReference>
<dbReference type="STRING" id="9606.ENSP00000383516"/>
<dbReference type="GlyGen" id="Q9NP08">
    <property type="glycosylation" value="2 sites, 1 O-linked glycan (1 site)"/>
</dbReference>
<dbReference type="iPTMnet" id="Q9NP08"/>
<dbReference type="PhosphoSitePlus" id="Q9NP08"/>
<dbReference type="BioMuta" id="HMX1"/>
<dbReference type="DMDM" id="259016250"/>
<dbReference type="jPOST" id="Q9NP08"/>
<dbReference type="MassIVE" id="Q9NP08"/>
<dbReference type="PaxDb" id="9606-ENSP00000383516"/>
<dbReference type="PeptideAtlas" id="Q9NP08"/>
<dbReference type="ProteomicsDB" id="81880"/>
<dbReference type="Antibodypedia" id="4687">
    <property type="antibodies" value="47 antibodies from 15 providers"/>
</dbReference>
<dbReference type="DNASU" id="3166"/>
<dbReference type="Ensembl" id="ENST00000400677.5">
    <property type="protein sequence ID" value="ENSP00000383516.3"/>
    <property type="gene ID" value="ENSG00000215612.8"/>
</dbReference>
<dbReference type="Ensembl" id="ENST00000673238.1">
    <property type="protein sequence ID" value="ENSP00000499825.1"/>
    <property type="gene ID" value="ENSG00000288204.1"/>
</dbReference>
<dbReference type="GeneID" id="3166"/>
<dbReference type="KEGG" id="hsa:3166"/>
<dbReference type="MANE-Select" id="ENST00000400677.5">
    <property type="protein sequence ID" value="ENSP00000383516.3"/>
    <property type="RefSeq nucleotide sequence ID" value="NM_018942.3"/>
    <property type="RefSeq protein sequence ID" value="NP_061815.2"/>
</dbReference>
<dbReference type="UCSC" id="uc003izz.2">
    <property type="organism name" value="human"/>
</dbReference>
<dbReference type="AGR" id="HGNC:5017"/>
<dbReference type="CTD" id="3166"/>
<dbReference type="DisGeNET" id="3166"/>
<dbReference type="GeneCards" id="HMX1"/>
<dbReference type="HGNC" id="HGNC:5017">
    <property type="gene designation" value="HMX1"/>
</dbReference>
<dbReference type="HPA" id="ENSG00000215612">
    <property type="expression patterns" value="Group enriched (brain, retina, testis)"/>
</dbReference>
<dbReference type="MalaCards" id="HMX1"/>
<dbReference type="MIM" id="142992">
    <property type="type" value="gene"/>
</dbReference>
<dbReference type="MIM" id="612109">
    <property type="type" value="phenotype"/>
</dbReference>
<dbReference type="neXtProt" id="NX_Q9NP08"/>
<dbReference type="OpenTargets" id="ENSG00000215612"/>
<dbReference type="Orphanet" id="157962">
    <property type="disease" value="Oculoauricular syndrome, Schorderet type"/>
</dbReference>
<dbReference type="PharmGKB" id="PA29344"/>
<dbReference type="VEuPathDB" id="HostDB:ENSG00000215612"/>
<dbReference type="eggNOG" id="KOG0485">
    <property type="taxonomic scope" value="Eukaryota"/>
</dbReference>
<dbReference type="GeneTree" id="ENSGT00940000162580"/>
<dbReference type="HOGENOM" id="CLU_064096_2_0_1"/>
<dbReference type="InParanoid" id="Q9NP08"/>
<dbReference type="OMA" id="TMEWYRR"/>
<dbReference type="OrthoDB" id="6159439at2759"/>
<dbReference type="PAN-GO" id="Q9NP08">
    <property type="GO annotations" value="5 GO annotations based on evolutionary models"/>
</dbReference>
<dbReference type="PhylomeDB" id="Q9NP08"/>
<dbReference type="TreeFam" id="TF320562"/>
<dbReference type="PathwayCommons" id="Q9NP08"/>
<dbReference type="BioGRID-ORCS" id="3166">
    <property type="hits" value="17 hits in 1170 CRISPR screens"/>
</dbReference>
<dbReference type="GenomeRNAi" id="3166"/>
<dbReference type="Pharos" id="Q9NP08">
    <property type="development level" value="Tbio"/>
</dbReference>
<dbReference type="PRO" id="PR:Q9NP08"/>
<dbReference type="Proteomes" id="UP000005640">
    <property type="component" value="Chromosome 4"/>
</dbReference>
<dbReference type="RNAct" id="Q9NP08">
    <property type="molecule type" value="protein"/>
</dbReference>
<dbReference type="Bgee" id="ENSG00000215612">
    <property type="expression patterns" value="Expressed in male germ line stem cell (sensu Vertebrata) in testis and 29 other cell types or tissues"/>
</dbReference>
<dbReference type="ExpressionAtlas" id="Q9NP08">
    <property type="expression patterns" value="baseline and differential"/>
</dbReference>
<dbReference type="GO" id="GO:0000785">
    <property type="term" value="C:chromatin"/>
    <property type="evidence" value="ECO:0000247"/>
    <property type="project" value="NTNU_SB"/>
</dbReference>
<dbReference type="GO" id="GO:0005634">
    <property type="term" value="C:nucleus"/>
    <property type="evidence" value="ECO:0000318"/>
    <property type="project" value="GO_Central"/>
</dbReference>
<dbReference type="GO" id="GO:0003677">
    <property type="term" value="F:DNA binding"/>
    <property type="evidence" value="ECO:0000315"/>
    <property type="project" value="UniProtKB"/>
</dbReference>
<dbReference type="GO" id="GO:0000981">
    <property type="term" value="F:DNA-binding transcription factor activity, RNA polymerase II-specific"/>
    <property type="evidence" value="ECO:0000247"/>
    <property type="project" value="NTNU_SB"/>
</dbReference>
<dbReference type="GO" id="GO:0001227">
    <property type="term" value="F:DNA-binding transcription repressor activity, RNA polymerase II-specific"/>
    <property type="evidence" value="ECO:0007669"/>
    <property type="project" value="Ensembl"/>
</dbReference>
<dbReference type="GO" id="GO:0000977">
    <property type="term" value="F:RNA polymerase II transcription regulatory region sequence-specific DNA binding"/>
    <property type="evidence" value="ECO:0000318"/>
    <property type="project" value="GO_Central"/>
</dbReference>
<dbReference type="GO" id="GO:1990837">
    <property type="term" value="F:sequence-specific double-stranded DNA binding"/>
    <property type="evidence" value="ECO:0000314"/>
    <property type="project" value="ARUK-UCL"/>
</dbReference>
<dbReference type="GO" id="GO:0045892">
    <property type="term" value="P:negative regulation of DNA-templated transcription"/>
    <property type="evidence" value="ECO:0000315"/>
    <property type="project" value="UniProtKB"/>
</dbReference>
<dbReference type="GO" id="GO:0006357">
    <property type="term" value="P:regulation of transcription by RNA polymerase II"/>
    <property type="evidence" value="ECO:0000318"/>
    <property type="project" value="GO_Central"/>
</dbReference>
<dbReference type="CDD" id="cd00086">
    <property type="entry name" value="homeodomain"/>
    <property type="match status" value="1"/>
</dbReference>
<dbReference type="FunFam" id="1.10.10.60:FF:000053">
    <property type="entry name" value="H6 family homeobox 2"/>
    <property type="match status" value="1"/>
</dbReference>
<dbReference type="Gene3D" id="1.10.10.60">
    <property type="entry name" value="Homeodomain-like"/>
    <property type="match status" value="1"/>
</dbReference>
<dbReference type="InterPro" id="IPR001356">
    <property type="entry name" value="HD"/>
</dbReference>
<dbReference type="InterPro" id="IPR020479">
    <property type="entry name" value="HD_metazoa"/>
</dbReference>
<dbReference type="InterPro" id="IPR051300">
    <property type="entry name" value="HMX_Homeobox_TF"/>
</dbReference>
<dbReference type="InterPro" id="IPR017970">
    <property type="entry name" value="Homeobox_CS"/>
</dbReference>
<dbReference type="InterPro" id="IPR009057">
    <property type="entry name" value="Homeodomain-like_sf"/>
</dbReference>
<dbReference type="PANTHER" id="PTHR46110">
    <property type="entry name" value="HOMEOBOX PROTEIN HMX"/>
    <property type="match status" value="1"/>
</dbReference>
<dbReference type="PANTHER" id="PTHR46110:SF1">
    <property type="entry name" value="HOMEOBOX PROTEIN HMX1"/>
    <property type="match status" value="1"/>
</dbReference>
<dbReference type="Pfam" id="PF00046">
    <property type="entry name" value="Homeodomain"/>
    <property type="match status" value="1"/>
</dbReference>
<dbReference type="PRINTS" id="PR00024">
    <property type="entry name" value="HOMEOBOX"/>
</dbReference>
<dbReference type="SMART" id="SM00389">
    <property type="entry name" value="HOX"/>
    <property type="match status" value="1"/>
</dbReference>
<dbReference type="SUPFAM" id="SSF46689">
    <property type="entry name" value="Homeodomain-like"/>
    <property type="match status" value="1"/>
</dbReference>
<dbReference type="PROSITE" id="PS00027">
    <property type="entry name" value="HOMEOBOX_1"/>
    <property type="match status" value="1"/>
</dbReference>
<dbReference type="PROSITE" id="PS50071">
    <property type="entry name" value="HOMEOBOX_2"/>
    <property type="match status" value="1"/>
</dbReference>
<organism>
    <name type="scientific">Homo sapiens</name>
    <name type="common">Human</name>
    <dbReference type="NCBI Taxonomy" id="9606"/>
    <lineage>
        <taxon>Eukaryota</taxon>
        <taxon>Metazoa</taxon>
        <taxon>Chordata</taxon>
        <taxon>Craniata</taxon>
        <taxon>Vertebrata</taxon>
        <taxon>Euteleostomi</taxon>
        <taxon>Mammalia</taxon>
        <taxon>Eutheria</taxon>
        <taxon>Euarchontoglires</taxon>
        <taxon>Primates</taxon>
        <taxon>Haplorrhini</taxon>
        <taxon>Catarrhini</taxon>
        <taxon>Hominidae</taxon>
        <taxon>Homo</taxon>
    </lineage>
</organism>
<comment type="function">
    <text evidence="3">DNA-binding protein that binds to the 5'-CAAG-3' core sequence. May function as a transcriptional repressor. Seems to act as a transcriptional antagonist of NKX2-5. May play an important role in the development of craniofacial structures such as the eye and ear.</text>
</comment>
<comment type="subcellular location">
    <subcellularLocation>
        <location evidence="5">Nucleus</location>
    </subcellularLocation>
</comment>
<comment type="disease" evidence="4">
    <disease id="DI-02084">
        <name>Oculoauricular syndrome</name>
        <acronym>OCACS</acronym>
        <description>A syndrome characterized by microphthalmia, microcornea, anterior segment dysgenesis, cataract, ocular coloboma, retinal pigment epithelium abnormalities, rod-cone dystrophy, and anomalies of the external ear.</description>
        <dbReference type="MIM" id="612109"/>
    </disease>
    <text>The disease is caused by variants affecting the gene represented in this entry.</text>
</comment>
<comment type="similarity">
    <text evidence="5">Belongs to the HMX homeobox family.</text>
</comment>
<comment type="sequence caution" evidence="5">
    <conflict type="frameshift">
        <sequence resource="EMBL-CDS" id="AAF70205"/>
    </conflict>
</comment>
<proteinExistence type="evidence at protein level"/>
<gene>
    <name type="primary">HMX1</name>
    <name type="synonym">H6</name>
</gene>
<sequence length="348" mass="36155">MPDELTEPGRATPARASSFLIENLLAAEAKGAGRATQGDGSREDEEEDDDDPEDEDAEQARRRRLQRRRQLLAGTGPGGEARARALLGPGALGLGPRPPPGPGPPFALGCGGAARWYPRAHGGYGGGLSPDTSDRDSPETGEEMGRAEGAWPRGPGPGAVQREAAELAARGPAAGTEEASELAEVPAAAGETRGGVGVGGGRKKKTRTVFSRSQVFQLESTFDLKRYLSSAERAGLAASLQLTETQVKIWFQNRRNKWKRQLAAELEAASLSPPGAQRLVRVPVLYHESPPAAAAAGPPATLPFPLAPAAPAPPPPLLGFSGALAYPLAAFPAAASVPFLRAQMPGLV</sequence>
<reference key="1">
    <citation type="journal article" date="1992" name="Proc. Natl. Acad. Sci. U.S.A.">
        <title>Identification and genetic mapping of a homeobox gene to the 4p16.1 region of human chromosome 4.</title>
        <authorList>
            <person name="Stadler H.S."/>
            <person name="Padanilam B.J."/>
            <person name="Buetow K."/>
            <person name="Murray J.C."/>
            <person name="Solursh M."/>
        </authorList>
    </citation>
    <scope>NUCLEOTIDE SEQUENCE [MRNA]</scope>
    <source>
        <tissue>Craniofacial</tissue>
    </source>
</reference>
<reference key="2">
    <citation type="journal article" date="2005" name="Nature">
        <title>Generation and annotation of the DNA sequences of human chromosomes 2 and 4.</title>
        <authorList>
            <person name="Hillier L.W."/>
            <person name="Graves T.A."/>
            <person name="Fulton R.S."/>
            <person name="Fulton L.A."/>
            <person name="Pepin K.H."/>
            <person name="Minx P."/>
            <person name="Wagner-McPherson C."/>
            <person name="Layman D."/>
            <person name="Wylie K."/>
            <person name="Sekhon M."/>
            <person name="Becker M.C."/>
            <person name="Fewell G.A."/>
            <person name="Delehaunty K.D."/>
            <person name="Miner T.L."/>
            <person name="Nash W.E."/>
            <person name="Kremitzki C."/>
            <person name="Oddy L."/>
            <person name="Du H."/>
            <person name="Sun H."/>
            <person name="Bradshaw-Cordum H."/>
            <person name="Ali J."/>
            <person name="Carter J."/>
            <person name="Cordes M."/>
            <person name="Harris A."/>
            <person name="Isak A."/>
            <person name="van Brunt A."/>
            <person name="Nguyen C."/>
            <person name="Du F."/>
            <person name="Courtney L."/>
            <person name="Kalicki J."/>
            <person name="Ozersky P."/>
            <person name="Abbott S."/>
            <person name="Armstrong J."/>
            <person name="Belter E.A."/>
            <person name="Caruso L."/>
            <person name="Cedroni M."/>
            <person name="Cotton M."/>
            <person name="Davidson T."/>
            <person name="Desai A."/>
            <person name="Elliott G."/>
            <person name="Erb T."/>
            <person name="Fronick C."/>
            <person name="Gaige T."/>
            <person name="Haakenson W."/>
            <person name="Haglund K."/>
            <person name="Holmes A."/>
            <person name="Harkins R."/>
            <person name="Kim K."/>
            <person name="Kruchowski S.S."/>
            <person name="Strong C.M."/>
            <person name="Grewal N."/>
            <person name="Goyea E."/>
            <person name="Hou S."/>
            <person name="Levy A."/>
            <person name="Martinka S."/>
            <person name="Mead K."/>
            <person name="McLellan M.D."/>
            <person name="Meyer R."/>
            <person name="Randall-Maher J."/>
            <person name="Tomlinson C."/>
            <person name="Dauphin-Kohlberg S."/>
            <person name="Kozlowicz-Reilly A."/>
            <person name="Shah N."/>
            <person name="Swearengen-Shahid S."/>
            <person name="Snider J."/>
            <person name="Strong J.T."/>
            <person name="Thompson J."/>
            <person name="Yoakum M."/>
            <person name="Leonard S."/>
            <person name="Pearman C."/>
            <person name="Trani L."/>
            <person name="Radionenko M."/>
            <person name="Waligorski J.E."/>
            <person name="Wang C."/>
            <person name="Rock S.M."/>
            <person name="Tin-Wollam A.-M."/>
            <person name="Maupin R."/>
            <person name="Latreille P."/>
            <person name="Wendl M.C."/>
            <person name="Yang S.-P."/>
            <person name="Pohl C."/>
            <person name="Wallis J.W."/>
            <person name="Spieth J."/>
            <person name="Bieri T.A."/>
            <person name="Berkowicz N."/>
            <person name="Nelson J.O."/>
            <person name="Osborne J."/>
            <person name="Ding L."/>
            <person name="Meyer R."/>
            <person name="Sabo A."/>
            <person name="Shotland Y."/>
            <person name="Sinha P."/>
            <person name="Wohldmann P.E."/>
            <person name="Cook L.L."/>
            <person name="Hickenbotham M.T."/>
            <person name="Eldred J."/>
            <person name="Williams D."/>
            <person name="Jones T.A."/>
            <person name="She X."/>
            <person name="Ciccarelli F.D."/>
            <person name="Izaurralde E."/>
            <person name="Taylor J."/>
            <person name="Schmutz J."/>
            <person name="Myers R.M."/>
            <person name="Cox D.R."/>
            <person name="Huang X."/>
            <person name="McPherson J.D."/>
            <person name="Mardis E.R."/>
            <person name="Clifton S.W."/>
            <person name="Warren W.C."/>
            <person name="Chinwalla A.T."/>
            <person name="Eddy S.R."/>
            <person name="Marra M.A."/>
            <person name="Ovcharenko I."/>
            <person name="Furey T.S."/>
            <person name="Miller W."/>
            <person name="Eichler E.E."/>
            <person name="Bork P."/>
            <person name="Suyama M."/>
            <person name="Torrents D."/>
            <person name="Waterston R.H."/>
            <person name="Wilson R.K."/>
        </authorList>
    </citation>
    <scope>NUCLEOTIDE SEQUENCE [LARGE SCALE GENOMIC DNA]</scope>
</reference>
<reference key="3">
    <citation type="journal article" date="1999" name="J. Biol. Chem.">
        <title>Transcriptional antagonism between Hmx1 and Nkx2.5 for a shared DNA-binding site.</title>
        <authorList>
            <person name="Amendt B.A."/>
            <person name="Sutherland L.B."/>
            <person name="Russo A.F."/>
        </authorList>
    </citation>
    <scope>FUNCTION</scope>
</reference>
<reference key="4">
    <citation type="journal article" date="2008" name="Am. J. Hum. Genet.">
        <title>Mutation in the human homeobox gene NKX5-3 causes an oculo-auricular syndrome.</title>
        <authorList>
            <person name="Schorderet D.F."/>
            <person name="Nichini O."/>
            <person name="Boisset G."/>
            <person name="Polok B."/>
            <person name="Tiab L."/>
            <person name="Mayeur H."/>
            <person name="Raji B."/>
            <person name="de la Houssaye G."/>
            <person name="Abitbol M.M."/>
            <person name="Munier F.L."/>
        </authorList>
    </citation>
    <scope>INVOLVEMENT IN OCACS</scope>
</reference>
<name>HMX1_HUMAN</name>